<reference key="1">
    <citation type="journal article" date="1999" name="Proc. Natl. Acad. Sci. U.S.A.">
        <title>CIR, a corepressor linking the DNA binding factor CBF1 to the histone deacetylase complex.</title>
        <authorList>
            <person name="Hsieh J.J.-D."/>
            <person name="Zhou S."/>
            <person name="Chen L."/>
            <person name="Young D.B."/>
            <person name="Hayward S.D."/>
        </authorList>
    </citation>
    <scope>NUCLEOTIDE SEQUENCE [MRNA] (ISOFORM 1)</scope>
    <scope>FUNCTION</scope>
    <scope>INTERACTION WITH RBPJ; SAP30 AND HDAC2</scope>
    <scope>SUBCELLULAR LOCATION</scope>
    <scope>TISSUE SPECIFICITY</scope>
</reference>
<reference key="2">
    <citation type="submission" date="1993-11" db="EMBL/GenBank/DDBJ databases">
        <authorList>
            <person name="Chai K.X."/>
            <person name="Li L."/>
            <person name="Chao J."/>
            <person name="Chao L."/>
        </authorList>
    </citation>
    <scope>NUCLEOTIDE SEQUENCE [MRNA] (ISOFORM 1)</scope>
    <source>
        <tissue>Liver</tissue>
    </source>
</reference>
<reference key="3">
    <citation type="journal article" date="2004" name="Nat. Genet.">
        <title>Complete sequencing and characterization of 21,243 full-length human cDNAs.</title>
        <authorList>
            <person name="Ota T."/>
            <person name="Suzuki Y."/>
            <person name="Nishikawa T."/>
            <person name="Otsuki T."/>
            <person name="Sugiyama T."/>
            <person name="Irie R."/>
            <person name="Wakamatsu A."/>
            <person name="Hayashi K."/>
            <person name="Sato H."/>
            <person name="Nagai K."/>
            <person name="Kimura K."/>
            <person name="Makita H."/>
            <person name="Sekine M."/>
            <person name="Obayashi M."/>
            <person name="Nishi T."/>
            <person name="Shibahara T."/>
            <person name="Tanaka T."/>
            <person name="Ishii S."/>
            <person name="Yamamoto J."/>
            <person name="Saito K."/>
            <person name="Kawai Y."/>
            <person name="Isono Y."/>
            <person name="Nakamura Y."/>
            <person name="Nagahari K."/>
            <person name="Murakami K."/>
            <person name="Yasuda T."/>
            <person name="Iwayanagi T."/>
            <person name="Wagatsuma M."/>
            <person name="Shiratori A."/>
            <person name="Sudo H."/>
            <person name="Hosoiri T."/>
            <person name="Kaku Y."/>
            <person name="Kodaira H."/>
            <person name="Kondo H."/>
            <person name="Sugawara M."/>
            <person name="Takahashi M."/>
            <person name="Kanda K."/>
            <person name="Yokoi T."/>
            <person name="Furuya T."/>
            <person name="Kikkawa E."/>
            <person name="Omura Y."/>
            <person name="Abe K."/>
            <person name="Kamihara K."/>
            <person name="Katsuta N."/>
            <person name="Sato K."/>
            <person name="Tanikawa M."/>
            <person name="Yamazaki M."/>
            <person name="Ninomiya K."/>
            <person name="Ishibashi T."/>
            <person name="Yamashita H."/>
            <person name="Murakawa K."/>
            <person name="Fujimori K."/>
            <person name="Tanai H."/>
            <person name="Kimata M."/>
            <person name="Watanabe M."/>
            <person name="Hiraoka S."/>
            <person name="Chiba Y."/>
            <person name="Ishida S."/>
            <person name="Ono Y."/>
            <person name="Takiguchi S."/>
            <person name="Watanabe S."/>
            <person name="Yosida M."/>
            <person name="Hotuta T."/>
            <person name="Kusano J."/>
            <person name="Kanehori K."/>
            <person name="Takahashi-Fujii A."/>
            <person name="Hara H."/>
            <person name="Tanase T.-O."/>
            <person name="Nomura Y."/>
            <person name="Togiya S."/>
            <person name="Komai F."/>
            <person name="Hara R."/>
            <person name="Takeuchi K."/>
            <person name="Arita M."/>
            <person name="Imose N."/>
            <person name="Musashino K."/>
            <person name="Yuuki H."/>
            <person name="Oshima A."/>
            <person name="Sasaki N."/>
            <person name="Aotsuka S."/>
            <person name="Yoshikawa Y."/>
            <person name="Matsunawa H."/>
            <person name="Ichihara T."/>
            <person name="Shiohata N."/>
            <person name="Sano S."/>
            <person name="Moriya S."/>
            <person name="Momiyama H."/>
            <person name="Satoh N."/>
            <person name="Takami S."/>
            <person name="Terashima Y."/>
            <person name="Suzuki O."/>
            <person name="Nakagawa S."/>
            <person name="Senoh A."/>
            <person name="Mizoguchi H."/>
            <person name="Goto Y."/>
            <person name="Shimizu F."/>
            <person name="Wakebe H."/>
            <person name="Hishigaki H."/>
            <person name="Watanabe T."/>
            <person name="Sugiyama A."/>
            <person name="Takemoto M."/>
            <person name="Kawakami B."/>
            <person name="Yamazaki M."/>
            <person name="Watanabe K."/>
            <person name="Kumagai A."/>
            <person name="Itakura S."/>
            <person name="Fukuzumi Y."/>
            <person name="Fujimori Y."/>
            <person name="Komiyama M."/>
            <person name="Tashiro H."/>
            <person name="Tanigami A."/>
            <person name="Fujiwara T."/>
            <person name="Ono T."/>
            <person name="Yamada K."/>
            <person name="Fujii Y."/>
            <person name="Ozaki K."/>
            <person name="Hirao M."/>
            <person name="Ohmori Y."/>
            <person name="Kawabata A."/>
            <person name="Hikiji T."/>
            <person name="Kobatake N."/>
            <person name="Inagaki H."/>
            <person name="Ikema Y."/>
            <person name="Okamoto S."/>
            <person name="Okitani R."/>
            <person name="Kawakami T."/>
            <person name="Noguchi S."/>
            <person name="Itoh T."/>
            <person name="Shigeta K."/>
            <person name="Senba T."/>
            <person name="Matsumura K."/>
            <person name="Nakajima Y."/>
            <person name="Mizuno T."/>
            <person name="Morinaga M."/>
            <person name="Sasaki M."/>
            <person name="Togashi T."/>
            <person name="Oyama M."/>
            <person name="Hata H."/>
            <person name="Watanabe M."/>
            <person name="Komatsu T."/>
            <person name="Mizushima-Sugano J."/>
            <person name="Satoh T."/>
            <person name="Shirai Y."/>
            <person name="Takahashi Y."/>
            <person name="Nakagawa K."/>
            <person name="Okumura K."/>
            <person name="Nagase T."/>
            <person name="Nomura N."/>
            <person name="Kikuchi H."/>
            <person name="Masuho Y."/>
            <person name="Yamashita R."/>
            <person name="Nakai K."/>
            <person name="Yada T."/>
            <person name="Nakamura Y."/>
            <person name="Ohara O."/>
            <person name="Isogai T."/>
            <person name="Sugano S."/>
        </authorList>
    </citation>
    <scope>NUCLEOTIDE SEQUENCE [LARGE SCALE MRNA] (ISOFORM 1)</scope>
    <source>
        <tissue>Testis</tissue>
    </source>
</reference>
<reference key="4">
    <citation type="journal article" date="2005" name="Nature">
        <title>Generation and annotation of the DNA sequences of human chromosomes 2 and 4.</title>
        <authorList>
            <person name="Hillier L.W."/>
            <person name="Graves T.A."/>
            <person name="Fulton R.S."/>
            <person name="Fulton L.A."/>
            <person name="Pepin K.H."/>
            <person name="Minx P."/>
            <person name="Wagner-McPherson C."/>
            <person name="Layman D."/>
            <person name="Wylie K."/>
            <person name="Sekhon M."/>
            <person name="Becker M.C."/>
            <person name="Fewell G.A."/>
            <person name="Delehaunty K.D."/>
            <person name="Miner T.L."/>
            <person name="Nash W.E."/>
            <person name="Kremitzki C."/>
            <person name="Oddy L."/>
            <person name="Du H."/>
            <person name="Sun H."/>
            <person name="Bradshaw-Cordum H."/>
            <person name="Ali J."/>
            <person name="Carter J."/>
            <person name="Cordes M."/>
            <person name="Harris A."/>
            <person name="Isak A."/>
            <person name="van Brunt A."/>
            <person name="Nguyen C."/>
            <person name="Du F."/>
            <person name="Courtney L."/>
            <person name="Kalicki J."/>
            <person name="Ozersky P."/>
            <person name="Abbott S."/>
            <person name="Armstrong J."/>
            <person name="Belter E.A."/>
            <person name="Caruso L."/>
            <person name="Cedroni M."/>
            <person name="Cotton M."/>
            <person name="Davidson T."/>
            <person name="Desai A."/>
            <person name="Elliott G."/>
            <person name="Erb T."/>
            <person name="Fronick C."/>
            <person name="Gaige T."/>
            <person name="Haakenson W."/>
            <person name="Haglund K."/>
            <person name="Holmes A."/>
            <person name="Harkins R."/>
            <person name="Kim K."/>
            <person name="Kruchowski S.S."/>
            <person name="Strong C.M."/>
            <person name="Grewal N."/>
            <person name="Goyea E."/>
            <person name="Hou S."/>
            <person name="Levy A."/>
            <person name="Martinka S."/>
            <person name="Mead K."/>
            <person name="McLellan M.D."/>
            <person name="Meyer R."/>
            <person name="Randall-Maher J."/>
            <person name="Tomlinson C."/>
            <person name="Dauphin-Kohlberg S."/>
            <person name="Kozlowicz-Reilly A."/>
            <person name="Shah N."/>
            <person name="Swearengen-Shahid S."/>
            <person name="Snider J."/>
            <person name="Strong J.T."/>
            <person name="Thompson J."/>
            <person name="Yoakum M."/>
            <person name="Leonard S."/>
            <person name="Pearman C."/>
            <person name="Trani L."/>
            <person name="Radionenko M."/>
            <person name="Waligorski J.E."/>
            <person name="Wang C."/>
            <person name="Rock S.M."/>
            <person name="Tin-Wollam A.-M."/>
            <person name="Maupin R."/>
            <person name="Latreille P."/>
            <person name="Wendl M.C."/>
            <person name="Yang S.-P."/>
            <person name="Pohl C."/>
            <person name="Wallis J.W."/>
            <person name="Spieth J."/>
            <person name="Bieri T.A."/>
            <person name="Berkowicz N."/>
            <person name="Nelson J.O."/>
            <person name="Osborne J."/>
            <person name="Ding L."/>
            <person name="Meyer R."/>
            <person name="Sabo A."/>
            <person name="Shotland Y."/>
            <person name="Sinha P."/>
            <person name="Wohldmann P.E."/>
            <person name="Cook L.L."/>
            <person name="Hickenbotham M.T."/>
            <person name="Eldred J."/>
            <person name="Williams D."/>
            <person name="Jones T.A."/>
            <person name="She X."/>
            <person name="Ciccarelli F.D."/>
            <person name="Izaurralde E."/>
            <person name="Taylor J."/>
            <person name="Schmutz J."/>
            <person name="Myers R.M."/>
            <person name="Cox D.R."/>
            <person name="Huang X."/>
            <person name="McPherson J.D."/>
            <person name="Mardis E.R."/>
            <person name="Clifton S.W."/>
            <person name="Warren W.C."/>
            <person name="Chinwalla A.T."/>
            <person name="Eddy S.R."/>
            <person name="Marra M.A."/>
            <person name="Ovcharenko I."/>
            <person name="Furey T.S."/>
            <person name="Miller W."/>
            <person name="Eichler E.E."/>
            <person name="Bork P."/>
            <person name="Suyama M."/>
            <person name="Torrents D."/>
            <person name="Waterston R.H."/>
            <person name="Wilson R.K."/>
        </authorList>
    </citation>
    <scope>NUCLEOTIDE SEQUENCE [LARGE SCALE GENOMIC DNA]</scope>
</reference>
<reference key="5">
    <citation type="journal article" date="2004" name="Genome Res.">
        <title>The status, quality, and expansion of the NIH full-length cDNA project: the Mammalian Gene Collection (MGC).</title>
        <authorList>
            <consortium name="The MGC Project Team"/>
        </authorList>
    </citation>
    <scope>NUCLEOTIDE SEQUENCE [LARGE SCALE MRNA] (ISOFORMS 1 AND 2)</scope>
    <source>
        <tissue>Eye</tissue>
        <tissue>Lymph</tissue>
        <tissue>Testis</tissue>
        <tissue>Uterus</tissue>
    </source>
</reference>
<reference key="6">
    <citation type="journal article" date="2000" name="J. Virol.">
        <title>A role for SKIP in EBNA2 activation of CBF1-repressed promoters.</title>
        <authorList>
            <person name="Zhou S."/>
            <person name="Fujimuro M."/>
            <person name="Hsieh J.J."/>
            <person name="Chen L."/>
            <person name="Hayward S.D."/>
        </authorList>
    </citation>
    <scope>INTERACTION WITH SNW1</scope>
</reference>
<reference key="7">
    <citation type="journal article" date="2001" name="J. Virol.">
        <title>Epstein-Barr virus BamHi-a rightward transcript-encoded RPMS protein interacts with the CBF1-associated corepressor CIR to negatively regulate the activity of EBNA2 and NotchIC.</title>
        <authorList>
            <person name="Zhang J."/>
            <person name="Chen H."/>
            <person name="Weinmaster G."/>
            <person name="Hayward S.D."/>
        </authorList>
    </citation>
    <scope>INTERACTION WITH EPSTEIN-BARR VIRUS RPMS1</scope>
    <scope>SUBCELLULAR LOCATION</scope>
</reference>
<reference key="8">
    <citation type="journal article" date="2006" name="Cell">
        <title>Global, in vivo, and site-specific phosphorylation dynamics in signaling networks.</title>
        <authorList>
            <person name="Olsen J.V."/>
            <person name="Blagoev B."/>
            <person name="Gnad F."/>
            <person name="Macek B."/>
            <person name="Kumar C."/>
            <person name="Mortensen P."/>
            <person name="Mann M."/>
        </authorList>
    </citation>
    <scope>PHOSPHORYLATION [LARGE SCALE ANALYSIS] AT SER-202</scope>
    <scope>IDENTIFICATION BY MASS SPECTROMETRY [LARGE SCALE ANALYSIS]</scope>
    <source>
        <tissue>Cervix carcinoma</tissue>
    </source>
</reference>
<reference key="9">
    <citation type="journal article" date="2008" name="Proc. Natl. Acad. Sci. U.S.A.">
        <title>A quantitative atlas of mitotic phosphorylation.</title>
        <authorList>
            <person name="Dephoure N."/>
            <person name="Zhou C."/>
            <person name="Villen J."/>
            <person name="Beausoleil S.A."/>
            <person name="Bakalarski C.E."/>
            <person name="Elledge S.J."/>
            <person name="Gygi S.P."/>
        </authorList>
    </citation>
    <scope>PHOSPHORYLATION [LARGE SCALE ANALYSIS] AT SER-202</scope>
    <scope>IDENTIFICATION BY MASS SPECTROMETRY [LARGE SCALE ANALYSIS]</scope>
    <source>
        <tissue>Cervix carcinoma</tissue>
    </source>
</reference>
<reference key="10">
    <citation type="journal article" date="2009" name="Immunity">
        <title>NKAP is a transcriptional repressor of notch signaling and is required for T cell development.</title>
        <authorList>
            <person name="Pajerowski A.G."/>
            <person name="Nguyen C."/>
            <person name="Aghajanian H."/>
            <person name="Shapiro M.J."/>
            <person name="Shapiro V.S."/>
        </authorList>
    </citation>
    <scope>FUNCTION</scope>
    <scope>INTERACTION WITH NKAP</scope>
</reference>
<reference key="11">
    <citation type="journal article" date="2009" name="Sci. Signal.">
        <title>Quantitative phosphoproteomic analysis of T cell receptor signaling reveals system-wide modulation of protein-protein interactions.</title>
        <authorList>
            <person name="Mayya V."/>
            <person name="Lundgren D.H."/>
            <person name="Hwang S.-I."/>
            <person name="Rezaul K."/>
            <person name="Wu L."/>
            <person name="Eng J.K."/>
            <person name="Rodionov V."/>
            <person name="Han D.K."/>
        </authorList>
    </citation>
    <scope>PHOSPHORYLATION [LARGE SCALE ANALYSIS] AT SER-202</scope>
    <scope>IDENTIFICATION BY MASS SPECTROMETRY [LARGE SCALE ANALYSIS]</scope>
    <source>
        <tissue>Leukemic T-cell</tissue>
    </source>
</reference>
<reference key="12">
    <citation type="journal article" date="2010" name="J. Proteome Res.">
        <title>Characterization of hNek6 interactome reveals an important role for its short N-terminal domain and colocalization with proteins at the centrosome.</title>
        <authorList>
            <person name="Vaz Meirelles G."/>
            <person name="Ferreira Lanza D.C."/>
            <person name="da Silva J.C."/>
            <person name="Santana Bernachi J."/>
            <person name="Paes Leme A.F."/>
            <person name="Kobarg J."/>
        </authorList>
    </citation>
    <scope>SUBCELLULAR LOCATION</scope>
    <scope>INTERACTION WITH NEK6</scope>
    <scope>PHOSPHORYLATION</scope>
</reference>
<reference key="13">
    <citation type="journal article" date="2011" name="Sci. Signal.">
        <title>System-wide temporal characterization of the proteome and phosphoproteome of human embryonic stem cell differentiation.</title>
        <authorList>
            <person name="Rigbolt K.T."/>
            <person name="Prokhorova T.A."/>
            <person name="Akimov V."/>
            <person name="Henningsen J."/>
            <person name="Johansen P.T."/>
            <person name="Kratchmarova I."/>
            <person name="Kassem M."/>
            <person name="Mann M."/>
            <person name="Olsen J.V."/>
            <person name="Blagoev B."/>
        </authorList>
    </citation>
    <scope>PHOSPHORYLATION [LARGE SCALE ANALYSIS] AT SER-202</scope>
    <scope>IDENTIFICATION BY MASS SPECTROMETRY [LARGE SCALE ANALYSIS]</scope>
</reference>
<reference key="14">
    <citation type="journal article" date="2013" name="J. Proteome Res.">
        <title>Toward a comprehensive characterization of a human cancer cell phosphoproteome.</title>
        <authorList>
            <person name="Zhou H."/>
            <person name="Di Palma S."/>
            <person name="Preisinger C."/>
            <person name="Peng M."/>
            <person name="Polat A.N."/>
            <person name="Heck A.J."/>
            <person name="Mohammed S."/>
        </authorList>
    </citation>
    <scope>PHOSPHORYLATION [LARGE SCALE ANALYSIS] AT SER-202</scope>
    <scope>IDENTIFICATION BY MASS SPECTROMETRY [LARGE SCALE ANALYSIS]</scope>
    <source>
        <tissue>Cervix carcinoma</tissue>
        <tissue>Erythroleukemia</tissue>
    </source>
</reference>
<reference key="15">
    <citation type="journal article" date="2017" name="Nat. Struct. Mol. Biol.">
        <title>Site-specific mapping of the human SUMO proteome reveals co-modification with phosphorylation.</title>
        <authorList>
            <person name="Hendriks I.A."/>
            <person name="Lyon D."/>
            <person name="Young C."/>
            <person name="Jensen L.J."/>
            <person name="Vertegaal A.C."/>
            <person name="Nielsen M.L."/>
        </authorList>
    </citation>
    <scope>SUMOYLATION [LARGE SCALE ANALYSIS] AT LYS-79 AND LYS-340</scope>
    <scope>IDENTIFICATION BY MASS SPECTROMETRY [LARGE SCALE ANALYSIS]</scope>
</reference>
<comment type="function">
    <text evidence="1 7 9">May modulate splice site selection during alternative splicing of pre-mRNAs (By similarity). Regulates transcription and acts as corepressor for RBPJ. Recruits RBPJ to the Sin3-histone deacetylase complex (HDAC). Required for RBPJ-mediated repression of transcription.</text>
</comment>
<comment type="subunit">
    <text evidence="2 5 6 7 8 9">Interacts with RP9, SNW1, SFRS1, SFRS2,U2AF1, RBPJ, SAP30, HDAC2 NKAP and NEK6. Interacts with Epstein-Barr virus RPMS1. Component of the histone deacetylase complex. Component of the Notch corepressor complex. Interacts with NKAPL (By similarity).</text>
</comment>
<comment type="interaction">
    <interactant intactId="EBI-627102">
        <id>Q86X95</id>
    </interactant>
    <interactant intactId="EBI-742887">
        <id>Q8TAP6</id>
        <label>CEP76</label>
    </interactant>
    <organismsDiffer>false</organismsDiffer>
    <experiments>3</experiments>
</comment>
<comment type="interaction">
    <interactant intactId="EBI-627102">
        <id>Q86X95</id>
    </interactant>
    <interactant intactId="EBI-398920">
        <id>Q07955</id>
        <label>SRSF1</label>
    </interactant>
    <organismsDiffer>false</organismsDiffer>
    <experiments>3</experiments>
</comment>
<comment type="interaction">
    <interactant intactId="EBI-627102">
        <id>Q86X95</id>
    </interactant>
    <interactant intactId="EBI-627047">
        <id>Q01130</id>
        <label>SRSF2</label>
    </interactant>
    <organismsDiffer>false</organismsDiffer>
    <experiments>4</experiments>
</comment>
<comment type="interaction">
    <interactant intactId="EBI-627102">
        <id>Q86X95</id>
    </interactant>
    <interactant intactId="EBI-632461">
        <id>Q01081</id>
        <label>U2AF1</label>
    </interactant>
    <organismsDiffer>false</organismsDiffer>
    <experiments>4</experiments>
</comment>
<comment type="interaction">
    <interactant intactId="EBI-12034850">
        <id>Q86X95-2</id>
    </interactant>
    <interactant intactId="EBI-710457">
        <id>Q7L190</id>
        <label>DPPA4</label>
    </interactant>
    <organismsDiffer>false</organismsDiffer>
    <experiments>3</experiments>
</comment>
<comment type="interaction">
    <interactant intactId="EBI-12034850">
        <id>Q86X95-2</id>
    </interactant>
    <interactant intactId="EBI-11323212">
        <id>Q8IYB1</id>
        <label>MB21D2</label>
    </interactant>
    <organismsDiffer>false</organismsDiffer>
    <experiments>3</experiments>
</comment>
<comment type="subcellular location">
    <subcellularLocation>
        <location>Nucleus speckle</location>
    </subcellularLocation>
    <subcellularLocation>
        <location>Cytoplasm</location>
        <location>Cytoskeleton</location>
        <location>Microtubule organizing center</location>
        <location>Centrosome</location>
    </subcellularLocation>
    <text>Colocalizes with NEK6 in the centrosome.</text>
</comment>
<comment type="alternative products">
    <event type="alternative splicing"/>
    <isoform>
        <id>Q86X95-1</id>
        <name>1</name>
        <sequence type="displayed"/>
    </isoform>
    <isoform>
        <id>Q86X95-2</id>
        <name>2</name>
        <sequence type="described" ref="VSP_020091 VSP_020092"/>
    </isoform>
</comment>
<comment type="tissue specificity">
    <text evidence="9">Highly expressed in heart, brain, placenta, liver, skeletal muscle and pancreas.</text>
</comment>
<comment type="PTM">
    <text evidence="8">Phosphorylated by NEK6.</text>
</comment>
<comment type="miscellaneous">
    <molecule>Isoform 2</molecule>
    <text evidence="11">May be produced at very low levels due to a premature stop codon in the mRNA, leading to nonsense-mediated mRNA decay.</text>
</comment>
<comment type="sequence caution" evidence="11">
    <conflict type="frameshift">
        <sequence resource="EMBL-CDS" id="AAA17853"/>
    </conflict>
</comment>
<comment type="sequence caution" evidence="11">
    <conflict type="miscellaneous discrepancy">
        <sequence resource="EMBL-CDS" id="AAH21175"/>
    </conflict>
    <text>Contaminating sequence. Potential poly-A sequence.</text>
</comment>
<comment type="sequence caution" evidence="11">
    <conflict type="miscellaneous discrepancy">
        <sequence resource="EMBL-CDS" id="AAH38987"/>
    </conflict>
    <text>Contaminating sequence. Potential poly-A sequence.</text>
</comment>
<protein>
    <recommendedName>
        <fullName>Corepressor interacting with RBPJ 1</fullName>
    </recommendedName>
    <alternativeName>
        <fullName>CBF1-interacting corepressor</fullName>
    </alternativeName>
    <alternativeName>
        <fullName>Recepin</fullName>
    </alternativeName>
</protein>
<dbReference type="EMBL" id="AF098297">
    <property type="protein sequence ID" value="AAD05243.1"/>
    <property type="molecule type" value="mRNA"/>
</dbReference>
<dbReference type="EMBL" id="U03644">
    <property type="protein sequence ID" value="AAA17853.1"/>
    <property type="status" value="ALT_FRAME"/>
    <property type="molecule type" value="mRNA"/>
</dbReference>
<dbReference type="EMBL" id="AK292389">
    <property type="protein sequence ID" value="BAF85078.1"/>
    <property type="molecule type" value="mRNA"/>
</dbReference>
<dbReference type="EMBL" id="AC018470">
    <property type="protein sequence ID" value="AAY24216.1"/>
    <property type="molecule type" value="Genomic_DNA"/>
</dbReference>
<dbReference type="EMBL" id="BC015040">
    <property type="status" value="NOT_ANNOTATED_CDS"/>
    <property type="molecule type" value="mRNA"/>
</dbReference>
<dbReference type="EMBL" id="BC021175">
    <property type="protein sequence ID" value="AAH21175.1"/>
    <property type="status" value="ALT_SEQ"/>
    <property type="molecule type" value="mRNA"/>
</dbReference>
<dbReference type="EMBL" id="BC038987">
    <property type="protein sequence ID" value="AAH38987.1"/>
    <property type="status" value="ALT_SEQ"/>
    <property type="molecule type" value="mRNA"/>
</dbReference>
<dbReference type="EMBL" id="BC046098">
    <property type="protein sequence ID" value="AAH46098.1"/>
    <property type="molecule type" value="mRNA"/>
</dbReference>
<dbReference type="CCDS" id="CCDS2256.1">
    <molecule id="Q86X95-1"/>
</dbReference>
<dbReference type="PIR" id="G01227">
    <property type="entry name" value="G01227"/>
</dbReference>
<dbReference type="RefSeq" id="NP_004873.3">
    <molecule id="Q86X95-1"/>
    <property type="nucleotide sequence ID" value="NM_004882.3"/>
</dbReference>
<dbReference type="PDB" id="6ZYM">
    <property type="method" value="EM"/>
    <property type="resolution" value="3.40 A"/>
    <property type="chains" value="9=1-450"/>
</dbReference>
<dbReference type="PDB" id="8I0W">
    <property type="method" value="EM"/>
    <property type="resolution" value="3.40 A"/>
    <property type="chains" value="4=1-450"/>
</dbReference>
<dbReference type="PDBsum" id="6ZYM"/>
<dbReference type="PDBsum" id="8I0W"/>
<dbReference type="EMDB" id="EMD-11569"/>
<dbReference type="EMDB" id="EMD-35113"/>
<dbReference type="SMR" id="Q86X95"/>
<dbReference type="BioGRID" id="114916">
    <property type="interactions" value="72"/>
</dbReference>
<dbReference type="FunCoup" id="Q86X95">
    <property type="interactions" value="2234"/>
</dbReference>
<dbReference type="IntAct" id="Q86X95">
    <property type="interactions" value="62"/>
</dbReference>
<dbReference type="MINT" id="Q86X95"/>
<dbReference type="STRING" id="9606.ENSP00000339723"/>
<dbReference type="GlyGen" id="Q86X95">
    <property type="glycosylation" value="3 sites, 1 O-linked glycan (3 sites)"/>
</dbReference>
<dbReference type="iPTMnet" id="Q86X95"/>
<dbReference type="PhosphoSitePlus" id="Q86X95"/>
<dbReference type="BioMuta" id="CIR1"/>
<dbReference type="DMDM" id="74727790"/>
<dbReference type="jPOST" id="Q86X95"/>
<dbReference type="MassIVE" id="Q86X95"/>
<dbReference type="PaxDb" id="9606-ENSP00000339723"/>
<dbReference type="PeptideAtlas" id="Q86X95"/>
<dbReference type="ProteomicsDB" id="70256">
    <molecule id="Q86X95-1"/>
</dbReference>
<dbReference type="ProteomicsDB" id="70257">
    <molecule id="Q86X95-2"/>
</dbReference>
<dbReference type="Pumba" id="Q86X95"/>
<dbReference type="Antibodypedia" id="19463">
    <property type="antibodies" value="142 antibodies from 23 providers"/>
</dbReference>
<dbReference type="DNASU" id="9541"/>
<dbReference type="Ensembl" id="ENST00000342016.8">
    <molecule id="Q86X95-1"/>
    <property type="protein sequence ID" value="ENSP00000339723.3"/>
    <property type="gene ID" value="ENSG00000138433.16"/>
</dbReference>
<dbReference type="GeneID" id="9541"/>
<dbReference type="KEGG" id="hsa:9541"/>
<dbReference type="MANE-Select" id="ENST00000342016.8">
    <property type="protein sequence ID" value="ENSP00000339723.3"/>
    <property type="RefSeq nucleotide sequence ID" value="NM_004882.4"/>
    <property type="RefSeq protein sequence ID" value="NP_004873.3"/>
</dbReference>
<dbReference type="UCSC" id="uc002uim.4">
    <molecule id="Q86X95-1"/>
    <property type="organism name" value="human"/>
</dbReference>
<dbReference type="AGR" id="HGNC:24217"/>
<dbReference type="CTD" id="9541"/>
<dbReference type="DisGeNET" id="9541"/>
<dbReference type="GeneCards" id="CIR1"/>
<dbReference type="HGNC" id="HGNC:24217">
    <property type="gene designation" value="CIR1"/>
</dbReference>
<dbReference type="HPA" id="ENSG00000138433">
    <property type="expression patterns" value="Low tissue specificity"/>
</dbReference>
<dbReference type="MIM" id="605228">
    <property type="type" value="gene"/>
</dbReference>
<dbReference type="neXtProt" id="NX_Q86X95"/>
<dbReference type="OpenTargets" id="ENSG00000138433"/>
<dbReference type="PharmGKB" id="PA165696415"/>
<dbReference type="VEuPathDB" id="HostDB:ENSG00000138433"/>
<dbReference type="eggNOG" id="KOG3794">
    <property type="taxonomic scope" value="Eukaryota"/>
</dbReference>
<dbReference type="GeneTree" id="ENSGT00730000111135"/>
<dbReference type="HOGENOM" id="CLU_035642_2_0_1"/>
<dbReference type="InParanoid" id="Q86X95"/>
<dbReference type="OMA" id="CSMYSIS"/>
<dbReference type="OrthoDB" id="6253837at2759"/>
<dbReference type="PAN-GO" id="Q86X95">
    <property type="GO annotations" value="3 GO annotations based on evolutionary models"/>
</dbReference>
<dbReference type="PhylomeDB" id="Q86X95"/>
<dbReference type="TreeFam" id="TF317567"/>
<dbReference type="PathwayCommons" id="Q86X95"/>
<dbReference type="SignaLink" id="Q86X95"/>
<dbReference type="SIGNOR" id="Q86X95"/>
<dbReference type="BioGRID-ORCS" id="9541">
    <property type="hits" value="98 hits in 1124 CRISPR screens"/>
</dbReference>
<dbReference type="ChiTaRS" id="CIR1">
    <property type="organism name" value="human"/>
</dbReference>
<dbReference type="GeneWiki" id="CIR_(gene)"/>
<dbReference type="GenomeRNAi" id="9541"/>
<dbReference type="Pharos" id="Q86X95">
    <property type="development level" value="Tdark"/>
</dbReference>
<dbReference type="PRO" id="PR:Q86X95"/>
<dbReference type="Proteomes" id="UP000005640">
    <property type="component" value="Chromosome 2"/>
</dbReference>
<dbReference type="RNAct" id="Q86X95">
    <property type="molecule type" value="protein"/>
</dbReference>
<dbReference type="Bgee" id="ENSG00000138433">
    <property type="expression patterns" value="Expressed in tendon of biceps brachii and 207 other cell types or tissues"/>
</dbReference>
<dbReference type="ExpressionAtlas" id="Q86X95">
    <property type="expression patterns" value="baseline and differential"/>
</dbReference>
<dbReference type="GO" id="GO:0005813">
    <property type="term" value="C:centrosome"/>
    <property type="evidence" value="ECO:0007669"/>
    <property type="project" value="UniProtKB-SubCell"/>
</dbReference>
<dbReference type="GO" id="GO:0005737">
    <property type="term" value="C:cytoplasm"/>
    <property type="evidence" value="ECO:0007669"/>
    <property type="project" value="UniProtKB-KW"/>
</dbReference>
<dbReference type="GO" id="GO:0016607">
    <property type="term" value="C:nuclear speck"/>
    <property type="evidence" value="ECO:0000314"/>
    <property type="project" value="HPA"/>
</dbReference>
<dbReference type="GO" id="GO:0005634">
    <property type="term" value="C:nucleus"/>
    <property type="evidence" value="ECO:0000314"/>
    <property type="project" value="UniProtKB"/>
</dbReference>
<dbReference type="GO" id="GO:0032991">
    <property type="term" value="C:protein-containing complex"/>
    <property type="evidence" value="ECO:0000314"/>
    <property type="project" value="UniProtKB"/>
</dbReference>
<dbReference type="GO" id="GO:0042826">
    <property type="term" value="F:histone deacetylase binding"/>
    <property type="evidence" value="ECO:0000314"/>
    <property type="project" value="MGI"/>
</dbReference>
<dbReference type="GO" id="GO:0019901">
    <property type="term" value="F:protein kinase binding"/>
    <property type="evidence" value="ECO:0000353"/>
    <property type="project" value="UniProtKB"/>
</dbReference>
<dbReference type="GO" id="GO:0044877">
    <property type="term" value="F:protein-containing complex binding"/>
    <property type="evidence" value="ECO:0000314"/>
    <property type="project" value="UniProtKB"/>
</dbReference>
<dbReference type="GO" id="GO:0003714">
    <property type="term" value="F:transcription corepressor activity"/>
    <property type="evidence" value="ECO:0000314"/>
    <property type="project" value="UniProtKB"/>
</dbReference>
<dbReference type="GO" id="GO:0001701">
    <property type="term" value="P:in utero embryonic development"/>
    <property type="evidence" value="ECO:0007669"/>
    <property type="project" value="Ensembl"/>
</dbReference>
<dbReference type="GO" id="GO:0006397">
    <property type="term" value="P:mRNA processing"/>
    <property type="evidence" value="ECO:0007669"/>
    <property type="project" value="UniProtKB-KW"/>
</dbReference>
<dbReference type="GO" id="GO:0045892">
    <property type="term" value="P:negative regulation of DNA-templated transcription"/>
    <property type="evidence" value="ECO:0000314"/>
    <property type="project" value="UniProtKB"/>
</dbReference>
<dbReference type="GO" id="GO:0000122">
    <property type="term" value="P:negative regulation of transcription by RNA polymerase II"/>
    <property type="evidence" value="ECO:0000314"/>
    <property type="project" value="MGI"/>
</dbReference>
<dbReference type="GO" id="GO:0008380">
    <property type="term" value="P:RNA splicing"/>
    <property type="evidence" value="ECO:0007669"/>
    <property type="project" value="UniProtKB-KW"/>
</dbReference>
<dbReference type="InterPro" id="IPR040014">
    <property type="entry name" value="CIR1"/>
</dbReference>
<dbReference type="InterPro" id="IPR019339">
    <property type="entry name" value="CIR_N_dom"/>
</dbReference>
<dbReference type="PANTHER" id="PTHR13151">
    <property type="entry name" value="CBF1 INTERACTING COREPRESSOR CIR"/>
    <property type="match status" value="1"/>
</dbReference>
<dbReference type="PANTHER" id="PTHR13151:SF2">
    <property type="entry name" value="COREPRESSOR INTERACTING WITH RBPJ 1"/>
    <property type="match status" value="1"/>
</dbReference>
<dbReference type="Pfam" id="PF10197">
    <property type="entry name" value="Cir_N"/>
    <property type="match status" value="1"/>
</dbReference>
<dbReference type="SMART" id="SM01083">
    <property type="entry name" value="Cir_N"/>
    <property type="match status" value="1"/>
</dbReference>
<evidence type="ECO:0000250" key="1"/>
<evidence type="ECO:0000250" key="2">
    <source>
        <dbReference type="UniProtKB" id="Q9DA19"/>
    </source>
</evidence>
<evidence type="ECO:0000255" key="3"/>
<evidence type="ECO:0000256" key="4">
    <source>
        <dbReference type="SAM" id="MobiDB-lite"/>
    </source>
</evidence>
<evidence type="ECO:0000269" key="5">
    <source>
    </source>
</evidence>
<evidence type="ECO:0000269" key="6">
    <source>
    </source>
</evidence>
<evidence type="ECO:0000269" key="7">
    <source>
    </source>
</evidence>
<evidence type="ECO:0000269" key="8">
    <source>
    </source>
</evidence>
<evidence type="ECO:0000269" key="9">
    <source>
    </source>
</evidence>
<evidence type="ECO:0000303" key="10">
    <source>
    </source>
</evidence>
<evidence type="ECO:0000305" key="11"/>
<evidence type="ECO:0007744" key="12">
    <source>
    </source>
</evidence>
<evidence type="ECO:0007744" key="13">
    <source>
    </source>
</evidence>
<evidence type="ECO:0007744" key="14">
    <source>
    </source>
</evidence>
<evidence type="ECO:0007744" key="15">
    <source>
    </source>
</evidence>
<evidence type="ECO:0007744" key="16">
    <source>
    </source>
</evidence>
<evidence type="ECO:0007744" key="17">
    <source>
    </source>
</evidence>
<evidence type="ECO:0007829" key="18">
    <source>
        <dbReference type="PDB" id="6ZYM"/>
    </source>
</evidence>
<accession>Q86X95</accession>
<accession>A6NFI6</accession>
<accession>A8K8M4</accession>
<accession>O95367</accession>
<accession>Q12804</accession>
<accession>Q4G1B9</accession>
<accession>Q6PJI4</accession>
<accession>Q8IWI2</accession>
<organism>
    <name type="scientific">Homo sapiens</name>
    <name type="common">Human</name>
    <dbReference type="NCBI Taxonomy" id="9606"/>
    <lineage>
        <taxon>Eukaryota</taxon>
        <taxon>Metazoa</taxon>
        <taxon>Chordata</taxon>
        <taxon>Craniata</taxon>
        <taxon>Vertebrata</taxon>
        <taxon>Euteleostomi</taxon>
        <taxon>Mammalia</taxon>
        <taxon>Eutheria</taxon>
        <taxon>Euarchontoglires</taxon>
        <taxon>Primates</taxon>
        <taxon>Haplorrhini</taxon>
        <taxon>Catarrhini</taxon>
        <taxon>Hominidae</taxon>
        <taxon>Homo</taxon>
    </lineage>
</organism>
<feature type="chain" id="PRO_0000247984" description="Corepressor interacting with RBPJ 1">
    <location>
        <begin position="1"/>
        <end position="450"/>
    </location>
</feature>
<feature type="region of interest" description="Interaction with RBPJ" evidence="9">
    <location>
        <begin position="1"/>
        <end position="121"/>
    </location>
</feature>
<feature type="region of interest" description="Disordered" evidence="4">
    <location>
        <begin position="72"/>
        <end position="93"/>
    </location>
</feature>
<feature type="region of interest" description="Interaction with RP9" evidence="1">
    <location>
        <begin position="204"/>
        <end position="232"/>
    </location>
</feature>
<feature type="region of interest" description="Disordered" evidence="4">
    <location>
        <begin position="218"/>
        <end position="450"/>
    </location>
</feature>
<feature type="short sequence motif" description="Nuclear localization signal" evidence="3">
    <location>
        <begin position="235"/>
        <end position="245"/>
    </location>
</feature>
<feature type="short sequence motif" description="Nuclear localization signal" evidence="3">
    <location>
        <begin position="291"/>
        <end position="298"/>
    </location>
</feature>
<feature type="compositionally biased region" description="Basic and acidic residues" evidence="4">
    <location>
        <begin position="78"/>
        <end position="93"/>
    </location>
</feature>
<feature type="compositionally biased region" description="Basic residues" evidence="4">
    <location>
        <begin position="233"/>
        <end position="257"/>
    </location>
</feature>
<feature type="compositionally biased region" description="Low complexity" evidence="4">
    <location>
        <begin position="258"/>
        <end position="281"/>
    </location>
</feature>
<feature type="compositionally biased region" description="Basic residues" evidence="4">
    <location>
        <begin position="288"/>
        <end position="299"/>
    </location>
</feature>
<feature type="compositionally biased region" description="Basic and acidic residues" evidence="4">
    <location>
        <begin position="305"/>
        <end position="324"/>
    </location>
</feature>
<feature type="compositionally biased region" description="Basic and acidic residues" evidence="4">
    <location>
        <begin position="331"/>
        <end position="358"/>
    </location>
</feature>
<feature type="compositionally biased region" description="Basic and acidic residues" evidence="4">
    <location>
        <begin position="367"/>
        <end position="387"/>
    </location>
</feature>
<feature type="compositionally biased region" description="Basic and acidic residues" evidence="4">
    <location>
        <begin position="411"/>
        <end position="440"/>
    </location>
</feature>
<feature type="modified residue" description="Phosphoserine" evidence="12 13 14 15 16">
    <location>
        <position position="202"/>
    </location>
</feature>
<feature type="cross-link" description="Glycyl lysine isopeptide (Lys-Gly) (interchain with G-Cter in SUMO2)" evidence="17">
    <location>
        <position position="79"/>
    </location>
</feature>
<feature type="cross-link" description="Glycyl lysine isopeptide (Lys-Gly) (interchain with G-Cter in SUMO2)" evidence="17">
    <location>
        <position position="340"/>
    </location>
</feature>
<feature type="splice variant" id="VSP_020091" description="In isoform 2." evidence="10">
    <original>GPSMHPSELIAEMRNSGFALKRNVLGRNLTANDPSQEYVAS</original>
    <variation>DAVLQIEGFWAIDAPLGANSGDEKQWVCTETKCTGEKLDRK</variation>
    <location>
        <begin position="162"/>
        <end position="202"/>
    </location>
</feature>
<feature type="splice variant" id="VSP_020092" description="In isoform 2." evidence="10">
    <location>
        <begin position="203"/>
        <end position="450"/>
    </location>
</feature>
<feature type="sequence conflict" description="In Ref. 1; AAD05243." evidence="11" ref="1">
    <original>K</original>
    <variation>R</variation>
    <location>
        <position position="48"/>
    </location>
</feature>
<feature type="sequence conflict" description="In Ref. 1; AAD05243." evidence="11" ref="1">
    <original>N</original>
    <variation>S</variation>
    <location>
        <position position="113"/>
    </location>
</feature>
<feature type="sequence conflict" description="In Ref. 2; AAA17853." evidence="11" ref="2">
    <original>A</original>
    <variation>G</variation>
    <location>
        <position position="172"/>
    </location>
</feature>
<feature type="sequence conflict" description="In Ref. 1; AAD05243 and 2; AAA17853." evidence="11" ref="1 2">
    <original>S</original>
    <variation>T</variation>
    <location>
        <position position="325"/>
    </location>
</feature>
<feature type="strand" evidence="18">
    <location>
        <begin position="103"/>
        <end position="105"/>
    </location>
</feature>
<name>CIR1_HUMAN</name>
<keyword id="KW-0002">3D-structure</keyword>
<keyword id="KW-0025">Alternative splicing</keyword>
<keyword id="KW-0963">Cytoplasm</keyword>
<keyword id="KW-0206">Cytoskeleton</keyword>
<keyword id="KW-1017">Isopeptide bond</keyword>
<keyword id="KW-0507">mRNA processing</keyword>
<keyword id="KW-0508">mRNA splicing</keyword>
<keyword id="KW-0539">Nucleus</keyword>
<keyword id="KW-0597">Phosphoprotein</keyword>
<keyword id="KW-1267">Proteomics identification</keyword>
<keyword id="KW-1185">Reference proteome</keyword>
<keyword id="KW-0678">Repressor</keyword>
<keyword id="KW-0804">Transcription</keyword>
<keyword id="KW-0805">Transcription regulation</keyword>
<keyword id="KW-0832">Ubl conjugation</keyword>
<gene>
    <name type="primary">CIR1</name>
    <name type="synonym">CIR</name>
</gene>
<sequence>MGKSFANFMCKKDFHPASKSNIKKVWMAEQKISYDKKKQEELMQQYLKEQESYDNRLLMGDERVKNGLNFMYEAPPGAKKENKEKEETEGETEYKFEWQKGAPREKYAKDDMNIRDQPFGIQVRNVRCIKCHKWGHVNTDRECPLFGLSGINASSVPTDGSGPSMHPSELIAEMRNSGFALKRNVLGRNLTANDPSQEYVASEGEEDPEVEFLKSLTTKQKQKLLRKLDRLEKKKKKKDRKKKKFQKSRSKHKKHKSSSSSSSSSSSSSSTETSESSSESESNNKEKKIQRKKRKKNKCSGHNNSDSEEKDKSKKRKLHEELSSSHHNREKAKEKPRFLKHESSREDSKWSHSDSDKKSRTHKHSPEKRGSERKEGSSRSHGREERSRRSRSRSPGSYKQRETRKRAQRNPGEEQSRRNDSRSHGTDLYRGEKMYREHPGGTHTKVTQRE</sequence>
<proteinExistence type="evidence at protein level"/>